<comment type="function">
    <text evidence="1">Assembles around the rod to form the L-ring and probably protects the motor/basal body from shearing forces during rotation.</text>
</comment>
<comment type="subunit">
    <text evidence="1">The basal body constitutes a major portion of the flagellar organelle and consists of four rings (L,P,S, and M) mounted on a central rod.</text>
</comment>
<comment type="subcellular location">
    <subcellularLocation>
        <location evidence="1">Periplasm</location>
    </subcellularLocation>
    <subcellularLocation>
        <location evidence="1">Bacterial flagellum basal body</location>
    </subcellularLocation>
</comment>
<comment type="similarity">
    <text evidence="1">Belongs to the FlgI family.</text>
</comment>
<reference key="1">
    <citation type="submission" date="2008-10" db="EMBL/GenBank/DDBJ databases">
        <title>The complete genome sequence of Helicobacter pylori strain P12.</title>
        <authorList>
            <person name="Fischer W."/>
            <person name="Windhager L."/>
            <person name="Karnholz A."/>
            <person name="Zeiller M."/>
            <person name="Zimmer R."/>
            <person name="Haas R."/>
        </authorList>
    </citation>
    <scope>NUCLEOTIDE SEQUENCE [LARGE SCALE GENOMIC DNA]</scope>
    <source>
        <strain>P12</strain>
    </source>
</reference>
<evidence type="ECO:0000255" key="1">
    <source>
        <dbReference type="HAMAP-Rule" id="MF_00416"/>
    </source>
</evidence>
<gene>
    <name evidence="1" type="primary">flgI</name>
    <name type="ordered locus">HPP12_0246</name>
</gene>
<name>FLGI_HELP2</name>
<feature type="signal peptide" evidence="1">
    <location>
        <begin position="1"/>
        <end position="19"/>
    </location>
</feature>
<feature type="chain" id="PRO_1000123974" description="Flagellar P-ring protein">
    <location>
        <begin position="20"/>
        <end position="342"/>
    </location>
</feature>
<dbReference type="EMBL" id="CP001217">
    <property type="protein sequence ID" value="ACJ07405.1"/>
    <property type="molecule type" value="Genomic_DNA"/>
</dbReference>
<dbReference type="SMR" id="B6JKH7"/>
<dbReference type="KEGG" id="hpp:HPP12_0246"/>
<dbReference type="HOGENOM" id="CLU_045235_1_0_7"/>
<dbReference type="Proteomes" id="UP000008198">
    <property type="component" value="Chromosome"/>
</dbReference>
<dbReference type="GO" id="GO:0009428">
    <property type="term" value="C:bacterial-type flagellum basal body, distal rod, P ring"/>
    <property type="evidence" value="ECO:0007669"/>
    <property type="project" value="InterPro"/>
</dbReference>
<dbReference type="GO" id="GO:0030288">
    <property type="term" value="C:outer membrane-bounded periplasmic space"/>
    <property type="evidence" value="ECO:0007669"/>
    <property type="project" value="InterPro"/>
</dbReference>
<dbReference type="GO" id="GO:0005198">
    <property type="term" value="F:structural molecule activity"/>
    <property type="evidence" value="ECO:0007669"/>
    <property type="project" value="InterPro"/>
</dbReference>
<dbReference type="GO" id="GO:0071973">
    <property type="term" value="P:bacterial-type flagellum-dependent cell motility"/>
    <property type="evidence" value="ECO:0007669"/>
    <property type="project" value="InterPro"/>
</dbReference>
<dbReference type="HAMAP" id="MF_00416">
    <property type="entry name" value="FlgI"/>
    <property type="match status" value="1"/>
</dbReference>
<dbReference type="InterPro" id="IPR001782">
    <property type="entry name" value="Flag_FlgI"/>
</dbReference>
<dbReference type="NCBIfam" id="NF003676">
    <property type="entry name" value="PRK05303.1"/>
    <property type="match status" value="1"/>
</dbReference>
<dbReference type="PANTHER" id="PTHR30381">
    <property type="entry name" value="FLAGELLAR P-RING PERIPLASMIC PROTEIN FLGI"/>
    <property type="match status" value="1"/>
</dbReference>
<dbReference type="PANTHER" id="PTHR30381:SF0">
    <property type="entry name" value="FLAGELLAR P-RING PROTEIN"/>
    <property type="match status" value="1"/>
</dbReference>
<dbReference type="Pfam" id="PF02119">
    <property type="entry name" value="FlgI"/>
    <property type="match status" value="1"/>
</dbReference>
<dbReference type="PRINTS" id="PR01010">
    <property type="entry name" value="FLGPRINGFLGI"/>
</dbReference>
<proteinExistence type="inferred from homology"/>
<accession>B6JKH7</accession>
<sequence>MKRVFLWLIFVLAFHKLLAEKIGDIASVVGVRDNQLIGYGLVIGLNGTGDKSGSKFTMQSISNMLESVNVKISADDIKSKNVAAVMITASLPPFARQGDKIDIHISSIGDAKSIQGGTLVMTPLNAVDGNIYALAQGAITSGNSNNLLSANIINGATIEREVSYDLFHKNAMVLSLKSPNFKNAIQVQNTLNKVFGNKVAIALDPKTIQITRPERFSMVEFLALVQEIPINYSAKNKIIVDEKSGTIISGVDIMVHPIVVTSQDITLKITKEPLNNSKNTQDLDNNMSLDTAHNTLSSNGKNITIAGVVKALQKIGVSAKGMVSILQALKKSGAISAEMEIL</sequence>
<keyword id="KW-0975">Bacterial flagellum</keyword>
<keyword id="KW-0574">Periplasm</keyword>
<keyword id="KW-0732">Signal</keyword>
<protein>
    <recommendedName>
        <fullName evidence="1">Flagellar P-ring protein</fullName>
    </recommendedName>
    <alternativeName>
        <fullName evidence="1">Basal body P-ring protein</fullName>
    </alternativeName>
</protein>
<organism>
    <name type="scientific">Helicobacter pylori (strain P12)</name>
    <dbReference type="NCBI Taxonomy" id="570508"/>
    <lineage>
        <taxon>Bacteria</taxon>
        <taxon>Pseudomonadati</taxon>
        <taxon>Campylobacterota</taxon>
        <taxon>Epsilonproteobacteria</taxon>
        <taxon>Campylobacterales</taxon>
        <taxon>Helicobacteraceae</taxon>
        <taxon>Helicobacter</taxon>
    </lineage>
</organism>